<protein>
    <recommendedName>
        <fullName evidence="2">Glutathione synthetase</fullName>
        <ecNumber evidence="2">6.3.2.3</ecNumber>
    </recommendedName>
    <alternativeName>
        <fullName evidence="2">GSH synthetase</fullName>
        <shortName evidence="2">GSH-S</shortName>
        <shortName evidence="2">GSHase</shortName>
    </alternativeName>
    <alternativeName>
        <fullName evidence="2">Glutathione synthase</fullName>
    </alternativeName>
</protein>
<proteinExistence type="inferred from homology"/>
<name>GSHB_NEIMB</name>
<comment type="catalytic activity">
    <reaction evidence="2">
        <text>gamma-L-glutamyl-L-cysteine + glycine + ATP = glutathione + ADP + phosphate + H(+)</text>
        <dbReference type="Rhea" id="RHEA:13557"/>
        <dbReference type="ChEBI" id="CHEBI:15378"/>
        <dbReference type="ChEBI" id="CHEBI:30616"/>
        <dbReference type="ChEBI" id="CHEBI:43474"/>
        <dbReference type="ChEBI" id="CHEBI:57305"/>
        <dbReference type="ChEBI" id="CHEBI:57925"/>
        <dbReference type="ChEBI" id="CHEBI:58173"/>
        <dbReference type="ChEBI" id="CHEBI:456216"/>
        <dbReference type="EC" id="6.3.2.3"/>
    </reaction>
</comment>
<comment type="cofactor">
    <cofactor evidence="1">
        <name>Mg(2+)</name>
        <dbReference type="ChEBI" id="CHEBI:18420"/>
    </cofactor>
    <cofactor evidence="1">
        <name>Mn(2+)</name>
        <dbReference type="ChEBI" id="CHEBI:29035"/>
    </cofactor>
    <text evidence="1">Binds 1 Mg(2+) or Mn(2+) ion per subunit.</text>
</comment>
<comment type="pathway">
    <text evidence="2">Sulfur metabolism; glutathione biosynthesis; glutathione from L-cysteine and L-glutamate: step 2/2.</text>
</comment>
<comment type="similarity">
    <text evidence="2">Belongs to the prokaryotic GSH synthase family.</text>
</comment>
<evidence type="ECO:0000250" key="1"/>
<evidence type="ECO:0000255" key="2">
    <source>
        <dbReference type="HAMAP-Rule" id="MF_00162"/>
    </source>
</evidence>
<reference key="1">
    <citation type="journal article" date="2000" name="Science">
        <title>Complete genome sequence of Neisseria meningitidis serogroup B strain MC58.</title>
        <authorList>
            <person name="Tettelin H."/>
            <person name="Saunders N.J."/>
            <person name="Heidelberg J.F."/>
            <person name="Jeffries A.C."/>
            <person name="Nelson K.E."/>
            <person name="Eisen J.A."/>
            <person name="Ketchum K.A."/>
            <person name="Hood D.W."/>
            <person name="Peden J.F."/>
            <person name="Dodson R.J."/>
            <person name="Nelson W.C."/>
            <person name="Gwinn M.L."/>
            <person name="DeBoy R.T."/>
            <person name="Peterson J.D."/>
            <person name="Hickey E.K."/>
            <person name="Haft D.H."/>
            <person name="Salzberg S.L."/>
            <person name="White O."/>
            <person name="Fleischmann R.D."/>
            <person name="Dougherty B.A."/>
            <person name="Mason T.M."/>
            <person name="Ciecko A."/>
            <person name="Parksey D.S."/>
            <person name="Blair E."/>
            <person name="Cittone H."/>
            <person name="Clark E.B."/>
            <person name="Cotton M.D."/>
            <person name="Utterback T.R."/>
            <person name="Khouri H.M."/>
            <person name="Qin H."/>
            <person name="Vamathevan J.J."/>
            <person name="Gill J."/>
            <person name="Scarlato V."/>
            <person name="Masignani V."/>
            <person name="Pizza M."/>
            <person name="Grandi G."/>
            <person name="Sun L."/>
            <person name="Smith H.O."/>
            <person name="Fraser C.M."/>
            <person name="Moxon E.R."/>
            <person name="Rappuoli R."/>
            <person name="Venter J.C."/>
        </authorList>
    </citation>
    <scope>NUCLEOTIDE SEQUENCE [LARGE SCALE GENOMIC DNA]</scope>
    <source>
        <strain>ATCC BAA-335 / MC58</strain>
    </source>
</reference>
<sequence length="319" mass="35146">MMKVLFIADPMASFKTYKDTTYAMMREMAKRGWRLFHTLSGELSVNGGLVTAQASAFEFLGAKNDDDHAWFKSADKVQTALEAFDAVIMRTDPPFDMQYLYATQLLTLAEQQGAKVFNSGQAMRDFNEKLAILNFSRFIAPTLVTTRSADVRTFLKEHGDIIIKPLDGMGGMGIFRLTEKDPNIGSILETLMQLDSRTIMAQRYIPEIVHGDKRILIIGGEVVPYALARIPQNGETRGNLAAGGRGVAQELGGRDREIAETLAPELKRRGILLAGLDVIGSNLTEVNVTSPTGFQEIMKQKGFDVAAMFADAVAAWSVR</sequence>
<organism>
    <name type="scientific">Neisseria meningitidis serogroup B (strain ATCC BAA-335 / MC58)</name>
    <dbReference type="NCBI Taxonomy" id="122586"/>
    <lineage>
        <taxon>Bacteria</taxon>
        <taxon>Pseudomonadati</taxon>
        <taxon>Pseudomonadota</taxon>
        <taxon>Betaproteobacteria</taxon>
        <taxon>Neisseriales</taxon>
        <taxon>Neisseriaceae</taxon>
        <taxon>Neisseria</taxon>
    </lineage>
</organism>
<dbReference type="EC" id="6.3.2.3" evidence="2"/>
<dbReference type="EMBL" id="AE002098">
    <property type="protein sequence ID" value="AAF41913.1"/>
    <property type="molecule type" value="Genomic_DNA"/>
</dbReference>
<dbReference type="PIR" id="D81069">
    <property type="entry name" value="D81069"/>
</dbReference>
<dbReference type="RefSeq" id="NP_274566.1">
    <property type="nucleotide sequence ID" value="NC_003112.2"/>
</dbReference>
<dbReference type="SMR" id="Q9JYJ3"/>
<dbReference type="FunCoup" id="Q9JYJ3">
    <property type="interactions" value="259"/>
</dbReference>
<dbReference type="STRING" id="122586.NMB1559"/>
<dbReference type="PaxDb" id="122586-NMB1559"/>
<dbReference type="KEGG" id="nme:NMB1559"/>
<dbReference type="PATRIC" id="fig|122586.8.peg.2006"/>
<dbReference type="HOGENOM" id="CLU_068239_0_0_4"/>
<dbReference type="InParanoid" id="Q9JYJ3"/>
<dbReference type="OrthoDB" id="9785415at2"/>
<dbReference type="UniPathway" id="UPA00142">
    <property type="reaction ID" value="UER00210"/>
</dbReference>
<dbReference type="PHI-base" id="PHI:8624"/>
<dbReference type="Proteomes" id="UP000000425">
    <property type="component" value="Chromosome"/>
</dbReference>
<dbReference type="GO" id="GO:0005737">
    <property type="term" value="C:cytoplasm"/>
    <property type="evidence" value="ECO:0000318"/>
    <property type="project" value="GO_Central"/>
</dbReference>
<dbReference type="GO" id="GO:0005524">
    <property type="term" value="F:ATP binding"/>
    <property type="evidence" value="ECO:0007669"/>
    <property type="project" value="UniProtKB-UniRule"/>
</dbReference>
<dbReference type="GO" id="GO:0004363">
    <property type="term" value="F:glutathione synthase activity"/>
    <property type="evidence" value="ECO:0000318"/>
    <property type="project" value="GO_Central"/>
</dbReference>
<dbReference type="GO" id="GO:0046872">
    <property type="term" value="F:metal ion binding"/>
    <property type="evidence" value="ECO:0007669"/>
    <property type="project" value="UniProtKB-KW"/>
</dbReference>
<dbReference type="FunFam" id="3.30.1490.20:FF:000009">
    <property type="entry name" value="Glutathione synthetase"/>
    <property type="match status" value="1"/>
</dbReference>
<dbReference type="Gene3D" id="3.40.50.20">
    <property type="match status" value="1"/>
</dbReference>
<dbReference type="Gene3D" id="3.30.1490.20">
    <property type="entry name" value="ATP-grasp fold, A domain"/>
    <property type="match status" value="1"/>
</dbReference>
<dbReference type="Gene3D" id="3.30.470.20">
    <property type="entry name" value="ATP-grasp fold, B domain"/>
    <property type="match status" value="1"/>
</dbReference>
<dbReference type="HAMAP" id="MF_00162">
    <property type="entry name" value="GSH_S"/>
    <property type="match status" value="1"/>
</dbReference>
<dbReference type="InterPro" id="IPR011761">
    <property type="entry name" value="ATP-grasp"/>
</dbReference>
<dbReference type="InterPro" id="IPR013815">
    <property type="entry name" value="ATP_grasp_subdomain_1"/>
</dbReference>
<dbReference type="InterPro" id="IPR006284">
    <property type="entry name" value="Glut_synth_pro"/>
</dbReference>
<dbReference type="InterPro" id="IPR004218">
    <property type="entry name" value="GSHS_ATP-bd"/>
</dbReference>
<dbReference type="InterPro" id="IPR004215">
    <property type="entry name" value="GSHS_N"/>
</dbReference>
<dbReference type="InterPro" id="IPR016185">
    <property type="entry name" value="PreATP-grasp_dom_sf"/>
</dbReference>
<dbReference type="NCBIfam" id="TIGR01380">
    <property type="entry name" value="glut_syn"/>
    <property type="match status" value="1"/>
</dbReference>
<dbReference type="NCBIfam" id="NF003573">
    <property type="entry name" value="PRK05246.1"/>
    <property type="match status" value="1"/>
</dbReference>
<dbReference type="PANTHER" id="PTHR21621:SF4">
    <property type="entry name" value="GLUTATHIONE SYNTHETASE"/>
    <property type="match status" value="1"/>
</dbReference>
<dbReference type="PANTHER" id="PTHR21621">
    <property type="entry name" value="RIBOSOMAL PROTEIN S6 MODIFICATION PROTEIN"/>
    <property type="match status" value="1"/>
</dbReference>
<dbReference type="Pfam" id="PF02955">
    <property type="entry name" value="GSH-S_ATP"/>
    <property type="match status" value="1"/>
</dbReference>
<dbReference type="Pfam" id="PF02951">
    <property type="entry name" value="GSH-S_N"/>
    <property type="match status" value="1"/>
</dbReference>
<dbReference type="SUPFAM" id="SSF56059">
    <property type="entry name" value="Glutathione synthetase ATP-binding domain-like"/>
    <property type="match status" value="1"/>
</dbReference>
<dbReference type="SUPFAM" id="SSF52440">
    <property type="entry name" value="PreATP-grasp domain"/>
    <property type="match status" value="1"/>
</dbReference>
<dbReference type="PROSITE" id="PS50975">
    <property type="entry name" value="ATP_GRASP"/>
    <property type="match status" value="1"/>
</dbReference>
<keyword id="KW-0067">ATP-binding</keyword>
<keyword id="KW-0317">Glutathione biosynthesis</keyword>
<keyword id="KW-0436">Ligase</keyword>
<keyword id="KW-0460">Magnesium</keyword>
<keyword id="KW-0464">Manganese</keyword>
<keyword id="KW-0479">Metal-binding</keyword>
<keyword id="KW-0547">Nucleotide-binding</keyword>
<keyword id="KW-1185">Reference proteome</keyword>
<accession>Q9JYJ3</accession>
<gene>
    <name evidence="2" type="primary">gshB</name>
    <name type="ordered locus">NMB1559</name>
</gene>
<feature type="chain" id="PRO_0000197470" description="Glutathione synthetase">
    <location>
        <begin position="1"/>
        <end position="319"/>
    </location>
</feature>
<feature type="domain" description="ATP-grasp" evidence="2">
    <location>
        <begin position="129"/>
        <end position="314"/>
    </location>
</feature>
<feature type="binding site" evidence="2">
    <location>
        <begin position="155"/>
        <end position="211"/>
    </location>
    <ligand>
        <name>ATP</name>
        <dbReference type="ChEBI" id="CHEBI:30616"/>
    </ligand>
</feature>
<feature type="binding site" evidence="2">
    <location>
        <position position="285"/>
    </location>
    <ligand>
        <name>Mg(2+)</name>
        <dbReference type="ChEBI" id="CHEBI:18420"/>
    </ligand>
</feature>
<feature type="binding site" evidence="2">
    <location>
        <position position="287"/>
    </location>
    <ligand>
        <name>Mg(2+)</name>
        <dbReference type="ChEBI" id="CHEBI:18420"/>
    </ligand>
</feature>